<comment type="similarity">
    <text evidence="1">Belongs to the UPF0173 family.</text>
</comment>
<sequence length="226" mass="24995">MKIHYYGHSCFGLEIGSSFLLFDPFISQNPLSDPTLLDTLNPQYILISHGHFDHIADASPIAKRTQAPILSNFEITLWLEKQGLSQVLPMNLGGNRSFDFGKIHYVQAAHSSSLPDGSYGGTAGGFIVEGPEGILYYAGDTALMSDMKLFGECFQIDIALLPIGGTFTMGVDEAIRAAHLLNCKQVMGVHFDTFEAIKIDHEEAKKKFQDEEIPFRLLKVKESLIL</sequence>
<name>Y129_METI4</name>
<proteinExistence type="inferred from homology"/>
<reference key="1">
    <citation type="journal article" date="2008" name="Biol. Direct">
        <title>Complete genome sequence of the extremely acidophilic methanotroph isolate V4, Methylacidiphilum infernorum, a representative of the bacterial phylum Verrucomicrobia.</title>
        <authorList>
            <person name="Hou S."/>
            <person name="Makarova K.S."/>
            <person name="Saw J.H."/>
            <person name="Senin P."/>
            <person name="Ly B.V."/>
            <person name="Zhou Z."/>
            <person name="Ren Y."/>
            <person name="Wang J."/>
            <person name="Galperin M.Y."/>
            <person name="Omelchenko M.V."/>
            <person name="Wolf Y.I."/>
            <person name="Yutin N."/>
            <person name="Koonin E.V."/>
            <person name="Stott M.B."/>
            <person name="Mountain B.W."/>
            <person name="Crowe M.A."/>
            <person name="Smirnova A.V."/>
            <person name="Dunfield P.F."/>
            <person name="Feng L."/>
            <person name="Wang L."/>
            <person name="Alam M."/>
        </authorList>
    </citation>
    <scope>NUCLEOTIDE SEQUENCE [LARGE SCALE GENOMIC DNA]</scope>
    <source>
        <strain>Isolate V4</strain>
    </source>
</reference>
<keyword id="KW-0378">Hydrolase</keyword>
<gene>
    <name type="ordered locus">Minf_0129</name>
</gene>
<accession>B3DX49</accession>
<protein>
    <recommendedName>
        <fullName evidence="1">UPF0173 metal-dependent hydrolase Minf_0129</fullName>
    </recommendedName>
</protein>
<dbReference type="EMBL" id="CP000975">
    <property type="protein sequence ID" value="ACD82189.1"/>
    <property type="molecule type" value="Genomic_DNA"/>
</dbReference>
<dbReference type="RefSeq" id="WP_012462471.1">
    <property type="nucleotide sequence ID" value="NC_010794.1"/>
</dbReference>
<dbReference type="SMR" id="B3DX49"/>
<dbReference type="STRING" id="481448.Minf_0129"/>
<dbReference type="KEGG" id="min:Minf_0129"/>
<dbReference type="eggNOG" id="COG2220">
    <property type="taxonomic scope" value="Bacteria"/>
</dbReference>
<dbReference type="HOGENOM" id="CLU_070010_4_1_0"/>
<dbReference type="OrthoDB" id="9789133at2"/>
<dbReference type="Proteomes" id="UP000009149">
    <property type="component" value="Chromosome"/>
</dbReference>
<dbReference type="GO" id="GO:0016787">
    <property type="term" value="F:hydrolase activity"/>
    <property type="evidence" value="ECO:0007669"/>
    <property type="project" value="UniProtKB-UniRule"/>
</dbReference>
<dbReference type="Gene3D" id="3.60.15.10">
    <property type="entry name" value="Ribonuclease Z/Hydroxyacylglutathione hydrolase-like"/>
    <property type="match status" value="1"/>
</dbReference>
<dbReference type="HAMAP" id="MF_00457">
    <property type="entry name" value="UPF0173"/>
    <property type="match status" value="1"/>
</dbReference>
<dbReference type="InterPro" id="IPR001279">
    <property type="entry name" value="Metallo-B-lactamas"/>
</dbReference>
<dbReference type="InterPro" id="IPR036866">
    <property type="entry name" value="RibonucZ/Hydroxyglut_hydro"/>
</dbReference>
<dbReference type="InterPro" id="IPR022877">
    <property type="entry name" value="UPF0173"/>
</dbReference>
<dbReference type="InterPro" id="IPR050114">
    <property type="entry name" value="UPF0173_UPF0282_UlaG_hydrolase"/>
</dbReference>
<dbReference type="NCBIfam" id="NF001911">
    <property type="entry name" value="PRK00685.1"/>
    <property type="match status" value="1"/>
</dbReference>
<dbReference type="PANTHER" id="PTHR43546:SF3">
    <property type="entry name" value="UPF0173 METAL-DEPENDENT HYDROLASE MJ1163"/>
    <property type="match status" value="1"/>
</dbReference>
<dbReference type="PANTHER" id="PTHR43546">
    <property type="entry name" value="UPF0173 METAL-DEPENDENT HYDROLASE MJ1163-RELATED"/>
    <property type="match status" value="1"/>
</dbReference>
<dbReference type="Pfam" id="PF12706">
    <property type="entry name" value="Lactamase_B_2"/>
    <property type="match status" value="1"/>
</dbReference>
<dbReference type="SMART" id="SM00849">
    <property type="entry name" value="Lactamase_B"/>
    <property type="match status" value="1"/>
</dbReference>
<dbReference type="SUPFAM" id="SSF56281">
    <property type="entry name" value="Metallo-hydrolase/oxidoreductase"/>
    <property type="match status" value="1"/>
</dbReference>
<feature type="chain" id="PRO_0000367190" description="UPF0173 metal-dependent hydrolase Minf_0129">
    <location>
        <begin position="1"/>
        <end position="226"/>
    </location>
</feature>
<organism>
    <name type="scientific">Methylacidiphilum infernorum (isolate V4)</name>
    <name type="common">Methylokorus infernorum (strain V4)</name>
    <dbReference type="NCBI Taxonomy" id="481448"/>
    <lineage>
        <taxon>Bacteria</taxon>
        <taxon>Pseudomonadati</taxon>
        <taxon>Verrucomicrobiota</taxon>
        <taxon>Methylacidiphilae</taxon>
        <taxon>Methylacidiphilales</taxon>
        <taxon>Methylacidiphilaceae</taxon>
        <taxon>Methylacidiphilum (ex Ratnadevi et al. 2023)</taxon>
    </lineage>
</organism>
<evidence type="ECO:0000255" key="1">
    <source>
        <dbReference type="HAMAP-Rule" id="MF_00457"/>
    </source>
</evidence>